<organism>
    <name type="scientific">Ipomoea purpurea</name>
    <name type="common">Common morning glory</name>
    <name type="synonym">Pharbitis purpurea</name>
    <dbReference type="NCBI Taxonomy" id="4121"/>
    <lineage>
        <taxon>Eukaryota</taxon>
        <taxon>Viridiplantae</taxon>
        <taxon>Streptophyta</taxon>
        <taxon>Embryophyta</taxon>
        <taxon>Tracheophyta</taxon>
        <taxon>Spermatophyta</taxon>
        <taxon>Magnoliopsida</taxon>
        <taxon>eudicotyledons</taxon>
        <taxon>Gunneridae</taxon>
        <taxon>Pentapetalae</taxon>
        <taxon>asterids</taxon>
        <taxon>lamiids</taxon>
        <taxon>Solanales</taxon>
        <taxon>Convolvulaceae</taxon>
        <taxon>Ipomoeeae</taxon>
        <taxon>Ipomoea</taxon>
    </lineage>
</organism>
<protein>
    <recommendedName>
        <fullName evidence="1">Photosystem II reaction center protein I</fullName>
        <shortName evidence="1">PSII-I</shortName>
    </recommendedName>
    <alternativeName>
        <fullName evidence="1">PSII 4.8 kDa protein</fullName>
    </alternativeName>
</protein>
<keyword id="KW-0150">Chloroplast</keyword>
<keyword id="KW-0472">Membrane</keyword>
<keyword id="KW-0602">Photosynthesis</keyword>
<keyword id="KW-0604">Photosystem II</keyword>
<keyword id="KW-0934">Plastid</keyword>
<keyword id="KW-0674">Reaction center</keyword>
<keyword id="KW-0793">Thylakoid</keyword>
<keyword id="KW-0812">Transmembrane</keyword>
<keyword id="KW-1133">Transmembrane helix</keyword>
<reference key="1">
    <citation type="journal article" date="2007" name="BMC Plant Biol.">
        <title>Complete plastid genome sequences suggest strong selection for retention of photosynthetic genes in the parasitic plant genus Cuscuta.</title>
        <authorList>
            <person name="McNeal J.R."/>
            <person name="Kuehl J.V."/>
            <person name="Boore J.L."/>
            <person name="dePamphilis C.W."/>
        </authorList>
    </citation>
    <scope>NUCLEOTIDE SEQUENCE [LARGE SCALE GENOMIC DNA]</scope>
</reference>
<gene>
    <name evidence="1" type="primary">psbI</name>
</gene>
<proteinExistence type="inferred from homology"/>
<name>PSBI_IPOPU</name>
<evidence type="ECO:0000255" key="1">
    <source>
        <dbReference type="HAMAP-Rule" id="MF_01316"/>
    </source>
</evidence>
<geneLocation type="chloroplast"/>
<comment type="function">
    <text evidence="1">One of the components of the core complex of photosystem II (PSII), required for its stability and/or assembly. PSII is a light-driven water:plastoquinone oxidoreductase that uses light energy to abstract electrons from H(2)O, generating O(2) and a proton gradient subsequently used for ATP formation. It consists of a core antenna complex that captures photons, and an electron transfer chain that converts photonic excitation into a charge separation.</text>
</comment>
<comment type="subunit">
    <text evidence="1">PSII is composed of 1 copy each of membrane proteins PsbA, PsbB, PsbC, PsbD, PsbE, PsbF, PsbH, PsbI, PsbJ, PsbK, PsbL, PsbM, PsbT, PsbX, PsbY, PsbZ, Psb30/Ycf12, at least 3 peripheral proteins of the oxygen-evolving complex and a large number of cofactors. It forms dimeric complexes.</text>
</comment>
<comment type="subcellular location">
    <subcellularLocation>
        <location evidence="1">Plastid</location>
        <location evidence="1">Chloroplast thylakoid membrane</location>
        <topology evidence="1">Single-pass membrane protein</topology>
    </subcellularLocation>
</comment>
<comment type="similarity">
    <text evidence="1">Belongs to the PsbI family.</text>
</comment>
<accession>A7Y3A3</accession>
<sequence length="36" mass="4168">MLTLKLFVYTVVIFFVSLFIFGFLSNDPGRNPGREE</sequence>
<feature type="chain" id="PRO_0000353234" description="Photosystem II reaction center protein I">
    <location>
        <begin position="1"/>
        <end position="36"/>
    </location>
</feature>
<feature type="transmembrane region" description="Helical" evidence="1">
    <location>
        <begin position="4"/>
        <end position="24"/>
    </location>
</feature>
<dbReference type="EMBL" id="EU118126">
    <property type="protein sequence ID" value="ABV02332.1"/>
    <property type="molecule type" value="Genomic_DNA"/>
</dbReference>
<dbReference type="RefSeq" id="YP_001468292.1">
    <property type="nucleotide sequence ID" value="NC_009808.1"/>
</dbReference>
<dbReference type="SMR" id="A7Y3A3"/>
<dbReference type="GeneID" id="5601311"/>
<dbReference type="GO" id="GO:0009535">
    <property type="term" value="C:chloroplast thylakoid membrane"/>
    <property type="evidence" value="ECO:0007669"/>
    <property type="project" value="UniProtKB-SubCell"/>
</dbReference>
<dbReference type="GO" id="GO:0009539">
    <property type="term" value="C:photosystem II reaction center"/>
    <property type="evidence" value="ECO:0007669"/>
    <property type="project" value="InterPro"/>
</dbReference>
<dbReference type="GO" id="GO:0015979">
    <property type="term" value="P:photosynthesis"/>
    <property type="evidence" value="ECO:0007669"/>
    <property type="project" value="UniProtKB-UniRule"/>
</dbReference>
<dbReference type="HAMAP" id="MF_01316">
    <property type="entry name" value="PSII_PsbI"/>
    <property type="match status" value="1"/>
</dbReference>
<dbReference type="InterPro" id="IPR003686">
    <property type="entry name" value="PSII_PsbI"/>
</dbReference>
<dbReference type="InterPro" id="IPR037271">
    <property type="entry name" value="PSII_PsbI_sf"/>
</dbReference>
<dbReference type="NCBIfam" id="NF002735">
    <property type="entry name" value="PRK02655.1"/>
    <property type="match status" value="1"/>
</dbReference>
<dbReference type="PANTHER" id="PTHR35772">
    <property type="entry name" value="PHOTOSYSTEM II REACTION CENTER PROTEIN I"/>
    <property type="match status" value="1"/>
</dbReference>
<dbReference type="PANTHER" id="PTHR35772:SF1">
    <property type="entry name" value="PHOTOSYSTEM II REACTION CENTER PROTEIN I"/>
    <property type="match status" value="1"/>
</dbReference>
<dbReference type="Pfam" id="PF02532">
    <property type="entry name" value="PsbI"/>
    <property type="match status" value="1"/>
</dbReference>
<dbReference type="SUPFAM" id="SSF161041">
    <property type="entry name" value="Photosystem II reaction center protein I, PsbI"/>
    <property type="match status" value="1"/>
</dbReference>